<reference key="1">
    <citation type="journal article" date="1984" name="Cell">
        <title>The gene family encoding the mouse ribosomal protein L32 contains a uniquely expressed intron-containing gene and an unmutated processed gene.</title>
        <authorList>
            <person name="Dudov K.P."/>
            <person name="Perry R.P."/>
        </authorList>
    </citation>
    <scope>NUCLEOTIDE SEQUENCE [GENOMIC DNA]</scope>
</reference>
<reference key="2">
    <citation type="journal article" date="2005" name="Science">
        <title>The transcriptional landscape of the mammalian genome.</title>
        <authorList>
            <person name="Carninci P."/>
            <person name="Kasukawa T."/>
            <person name="Katayama S."/>
            <person name="Gough J."/>
            <person name="Frith M.C."/>
            <person name="Maeda N."/>
            <person name="Oyama R."/>
            <person name="Ravasi T."/>
            <person name="Lenhard B."/>
            <person name="Wells C."/>
            <person name="Kodzius R."/>
            <person name="Shimokawa K."/>
            <person name="Bajic V.B."/>
            <person name="Brenner S.E."/>
            <person name="Batalov S."/>
            <person name="Forrest A.R."/>
            <person name="Zavolan M."/>
            <person name="Davis M.J."/>
            <person name="Wilming L.G."/>
            <person name="Aidinis V."/>
            <person name="Allen J.E."/>
            <person name="Ambesi-Impiombato A."/>
            <person name="Apweiler R."/>
            <person name="Aturaliya R.N."/>
            <person name="Bailey T.L."/>
            <person name="Bansal M."/>
            <person name="Baxter L."/>
            <person name="Beisel K.W."/>
            <person name="Bersano T."/>
            <person name="Bono H."/>
            <person name="Chalk A.M."/>
            <person name="Chiu K.P."/>
            <person name="Choudhary V."/>
            <person name="Christoffels A."/>
            <person name="Clutterbuck D.R."/>
            <person name="Crowe M.L."/>
            <person name="Dalla E."/>
            <person name="Dalrymple B.P."/>
            <person name="de Bono B."/>
            <person name="Della Gatta G."/>
            <person name="di Bernardo D."/>
            <person name="Down T."/>
            <person name="Engstrom P."/>
            <person name="Fagiolini M."/>
            <person name="Faulkner G."/>
            <person name="Fletcher C.F."/>
            <person name="Fukushima T."/>
            <person name="Furuno M."/>
            <person name="Futaki S."/>
            <person name="Gariboldi M."/>
            <person name="Georgii-Hemming P."/>
            <person name="Gingeras T.R."/>
            <person name="Gojobori T."/>
            <person name="Green R.E."/>
            <person name="Gustincich S."/>
            <person name="Harbers M."/>
            <person name="Hayashi Y."/>
            <person name="Hensch T.K."/>
            <person name="Hirokawa N."/>
            <person name="Hill D."/>
            <person name="Huminiecki L."/>
            <person name="Iacono M."/>
            <person name="Ikeo K."/>
            <person name="Iwama A."/>
            <person name="Ishikawa T."/>
            <person name="Jakt M."/>
            <person name="Kanapin A."/>
            <person name="Katoh M."/>
            <person name="Kawasawa Y."/>
            <person name="Kelso J."/>
            <person name="Kitamura H."/>
            <person name="Kitano H."/>
            <person name="Kollias G."/>
            <person name="Krishnan S.P."/>
            <person name="Kruger A."/>
            <person name="Kummerfeld S.K."/>
            <person name="Kurochkin I.V."/>
            <person name="Lareau L.F."/>
            <person name="Lazarevic D."/>
            <person name="Lipovich L."/>
            <person name="Liu J."/>
            <person name="Liuni S."/>
            <person name="McWilliam S."/>
            <person name="Madan Babu M."/>
            <person name="Madera M."/>
            <person name="Marchionni L."/>
            <person name="Matsuda H."/>
            <person name="Matsuzawa S."/>
            <person name="Miki H."/>
            <person name="Mignone F."/>
            <person name="Miyake S."/>
            <person name="Morris K."/>
            <person name="Mottagui-Tabar S."/>
            <person name="Mulder N."/>
            <person name="Nakano N."/>
            <person name="Nakauchi H."/>
            <person name="Ng P."/>
            <person name="Nilsson R."/>
            <person name="Nishiguchi S."/>
            <person name="Nishikawa S."/>
            <person name="Nori F."/>
            <person name="Ohara O."/>
            <person name="Okazaki Y."/>
            <person name="Orlando V."/>
            <person name="Pang K.C."/>
            <person name="Pavan W.J."/>
            <person name="Pavesi G."/>
            <person name="Pesole G."/>
            <person name="Petrovsky N."/>
            <person name="Piazza S."/>
            <person name="Reed J."/>
            <person name="Reid J.F."/>
            <person name="Ring B.Z."/>
            <person name="Ringwald M."/>
            <person name="Rost B."/>
            <person name="Ruan Y."/>
            <person name="Salzberg S.L."/>
            <person name="Sandelin A."/>
            <person name="Schneider C."/>
            <person name="Schoenbach C."/>
            <person name="Sekiguchi K."/>
            <person name="Semple C.A."/>
            <person name="Seno S."/>
            <person name="Sessa L."/>
            <person name="Sheng Y."/>
            <person name="Shibata Y."/>
            <person name="Shimada H."/>
            <person name="Shimada K."/>
            <person name="Silva D."/>
            <person name="Sinclair B."/>
            <person name="Sperling S."/>
            <person name="Stupka E."/>
            <person name="Sugiura K."/>
            <person name="Sultana R."/>
            <person name="Takenaka Y."/>
            <person name="Taki K."/>
            <person name="Tammoja K."/>
            <person name="Tan S.L."/>
            <person name="Tang S."/>
            <person name="Taylor M.S."/>
            <person name="Tegner J."/>
            <person name="Teichmann S.A."/>
            <person name="Ueda H.R."/>
            <person name="van Nimwegen E."/>
            <person name="Verardo R."/>
            <person name="Wei C.L."/>
            <person name="Yagi K."/>
            <person name="Yamanishi H."/>
            <person name="Zabarovsky E."/>
            <person name="Zhu S."/>
            <person name="Zimmer A."/>
            <person name="Hide W."/>
            <person name="Bult C."/>
            <person name="Grimmond S.M."/>
            <person name="Teasdale R.D."/>
            <person name="Liu E.T."/>
            <person name="Brusic V."/>
            <person name="Quackenbush J."/>
            <person name="Wahlestedt C."/>
            <person name="Mattick J.S."/>
            <person name="Hume D.A."/>
            <person name="Kai C."/>
            <person name="Sasaki D."/>
            <person name="Tomaru Y."/>
            <person name="Fukuda S."/>
            <person name="Kanamori-Katayama M."/>
            <person name="Suzuki M."/>
            <person name="Aoki J."/>
            <person name="Arakawa T."/>
            <person name="Iida J."/>
            <person name="Imamura K."/>
            <person name="Itoh M."/>
            <person name="Kato T."/>
            <person name="Kawaji H."/>
            <person name="Kawagashira N."/>
            <person name="Kawashima T."/>
            <person name="Kojima M."/>
            <person name="Kondo S."/>
            <person name="Konno H."/>
            <person name="Nakano K."/>
            <person name="Ninomiya N."/>
            <person name="Nishio T."/>
            <person name="Okada M."/>
            <person name="Plessy C."/>
            <person name="Shibata K."/>
            <person name="Shiraki T."/>
            <person name="Suzuki S."/>
            <person name="Tagami M."/>
            <person name="Waki K."/>
            <person name="Watahiki A."/>
            <person name="Okamura-Oho Y."/>
            <person name="Suzuki H."/>
            <person name="Kawai J."/>
            <person name="Hayashizaki Y."/>
        </authorList>
    </citation>
    <scope>NUCLEOTIDE SEQUENCE [LARGE SCALE MRNA]</scope>
    <source>
        <strain>BALB/cJ</strain>
        <strain>C57BL/6J</strain>
        <tissue>Bone marrow</tissue>
        <tissue>Kidney</tissue>
        <tissue>Liver</tissue>
        <tissue>Pancreas</tissue>
        <tissue>Stomach</tissue>
    </source>
</reference>
<reference key="3">
    <citation type="journal article" date="2004" name="Genome Res.">
        <title>The status, quality, and expansion of the NIH full-length cDNA project: the Mammalian Gene Collection (MGC).</title>
        <authorList>
            <consortium name="The MGC Project Team"/>
        </authorList>
    </citation>
    <scope>NUCLEOTIDE SEQUENCE [LARGE SCALE MRNA]</scope>
    <source>
        <strain>FVB/N</strain>
        <tissue>Colon</tissue>
    </source>
</reference>
<reference key="4">
    <citation type="journal article" date="2010" name="Cell">
        <title>A tissue-specific atlas of mouse protein phosphorylation and expression.</title>
        <authorList>
            <person name="Huttlin E.L."/>
            <person name="Jedrychowski M.P."/>
            <person name="Elias J.E."/>
            <person name="Goswami T."/>
            <person name="Rad R."/>
            <person name="Beausoleil S.A."/>
            <person name="Villen J."/>
            <person name="Haas W."/>
            <person name="Sowa M.E."/>
            <person name="Gygi S.P."/>
        </authorList>
    </citation>
    <scope>IDENTIFICATION BY MASS SPECTROMETRY [LARGE SCALE ANALYSIS]</scope>
    <source>
        <tissue>Brain</tissue>
        <tissue>Brown adipose tissue</tissue>
        <tissue>Heart</tissue>
        <tissue>Kidney</tissue>
        <tissue>Liver</tissue>
        <tissue>Lung</tissue>
        <tissue>Pancreas</tissue>
        <tissue>Spleen</tissue>
        <tissue>Testis</tissue>
    </source>
</reference>
<reference key="5">
    <citation type="journal article" date="2013" name="Mol. Cell">
        <title>SIRT5-mediated lysine desuccinylation impacts diverse metabolic pathways.</title>
        <authorList>
            <person name="Park J."/>
            <person name="Chen Y."/>
            <person name="Tishkoff D.X."/>
            <person name="Peng C."/>
            <person name="Tan M."/>
            <person name="Dai L."/>
            <person name="Xie Z."/>
            <person name="Zhang Y."/>
            <person name="Zwaans B.M."/>
            <person name="Skinner M.E."/>
            <person name="Lombard D.B."/>
            <person name="Zhao Y."/>
        </authorList>
    </citation>
    <scope>SUCCINYLATION [LARGE SCALE ANALYSIS] AT LYS-50</scope>
    <scope>IDENTIFICATION BY MASS SPECTROMETRY [LARGE SCALE ANALYSIS]</scope>
    <source>
        <tissue>Embryonic fibroblast</tissue>
    </source>
</reference>
<reference evidence="4 5" key="6">
    <citation type="journal article" date="2022" name="Nature">
        <title>A male germ-cell-specific ribosome controls male fertility.</title>
        <authorList>
            <person name="Li H."/>
            <person name="Huo Y."/>
            <person name="He X."/>
            <person name="Yao L."/>
            <person name="Zhang H."/>
            <person name="Cui Y."/>
            <person name="Xiao H."/>
            <person name="Xie W."/>
            <person name="Zhang D."/>
            <person name="Wang Y."/>
            <person name="Zhang S."/>
            <person name="Tu H."/>
            <person name="Cheng Y."/>
            <person name="Guo Y."/>
            <person name="Cao X."/>
            <person name="Zhu Y."/>
            <person name="Jiang T."/>
            <person name="Guo X."/>
            <person name="Qin Y."/>
            <person name="Sha J."/>
        </authorList>
    </citation>
    <scope>STRUCTURE BY ELECTRON MICROSCOPY (3.03 ANGSTROMS) OF RIBOSOME</scope>
    <scope>FUNCTION</scope>
    <scope>SUBUNIT</scope>
    <scope>SUBCELLULAR LOCATION</scope>
</reference>
<organism>
    <name type="scientific">Mus musculus</name>
    <name type="common">Mouse</name>
    <dbReference type="NCBI Taxonomy" id="10090"/>
    <lineage>
        <taxon>Eukaryota</taxon>
        <taxon>Metazoa</taxon>
        <taxon>Chordata</taxon>
        <taxon>Craniata</taxon>
        <taxon>Vertebrata</taxon>
        <taxon>Euteleostomi</taxon>
        <taxon>Mammalia</taxon>
        <taxon>Eutheria</taxon>
        <taxon>Euarchontoglires</taxon>
        <taxon>Glires</taxon>
        <taxon>Rodentia</taxon>
        <taxon>Myomorpha</taxon>
        <taxon>Muroidea</taxon>
        <taxon>Muridae</taxon>
        <taxon>Murinae</taxon>
        <taxon>Mus</taxon>
        <taxon>Mus</taxon>
    </lineage>
</organism>
<feature type="chain" id="PRO_0000131115" description="Large ribosomal subunit protein eL32">
    <location>
        <begin position="1"/>
        <end position="135"/>
    </location>
</feature>
<feature type="modified residue" description="N6-succinyllysine" evidence="6">
    <location>
        <position position="50"/>
    </location>
</feature>
<feature type="modified residue" description="Phosphoserine" evidence="1">
    <location>
        <position position="62"/>
    </location>
</feature>
<feature type="cross-link" description="Glycyl lysine isopeptide (Lys-Gly) (interchain with G-Cter in SUMO2)" evidence="1">
    <location>
        <position position="9"/>
    </location>
</feature>
<name>RL32_MOUSE</name>
<protein>
    <recommendedName>
        <fullName evidence="3">Large ribosomal subunit protein eL32</fullName>
    </recommendedName>
    <alternativeName>
        <fullName>60S ribosomal protein L32</fullName>
    </alternativeName>
</protein>
<sequence length="135" mass="15860">MAALRPLVKPKIVKKRTKKFIRHQSDRYVKIKRNWRKPRGIDNRVRRRFKGQILMPNIGYGSNKKTKHMLPSGFRKFLVHNVKELEVLLMCNKSYCAEIAHNVSSKNRKAIVERAAQLAIRVTNPNARLRSEENE</sequence>
<comment type="function">
    <text evidence="2">Component of the large ribosomal subunit (PubMed:36517592). The ribosome is a large ribonucleoprotein complex responsible for the synthesis of proteins in the cell (PubMed:36517592).</text>
</comment>
<comment type="subunit">
    <text evidence="2">Component of the large ribosomal subunit.</text>
</comment>
<comment type="subcellular location">
    <subcellularLocation>
        <location evidence="2">Cytoplasm</location>
    </subcellularLocation>
</comment>
<comment type="similarity">
    <text evidence="3">Belongs to the eukaryotic ribosomal protein eL32 family.</text>
</comment>
<proteinExistence type="evidence at protein level"/>
<evidence type="ECO:0000250" key="1">
    <source>
        <dbReference type="UniProtKB" id="P62910"/>
    </source>
</evidence>
<evidence type="ECO:0000269" key="2">
    <source>
    </source>
</evidence>
<evidence type="ECO:0000305" key="3"/>
<evidence type="ECO:0007744" key="4">
    <source>
        <dbReference type="PDB" id="7CPU"/>
    </source>
</evidence>
<evidence type="ECO:0007744" key="5">
    <source>
        <dbReference type="PDB" id="7CPV"/>
    </source>
</evidence>
<evidence type="ECO:0007744" key="6">
    <source>
    </source>
</evidence>
<dbReference type="EMBL" id="K02060">
    <property type="protein sequence ID" value="AAC28897.1"/>
    <property type="molecule type" value="Genomic_DNA"/>
</dbReference>
<dbReference type="EMBL" id="AK002353">
    <property type="protein sequence ID" value="BAB22032.1"/>
    <property type="molecule type" value="mRNA"/>
</dbReference>
<dbReference type="EMBL" id="AK011017">
    <property type="protein sequence ID" value="BAB27335.1"/>
    <property type="molecule type" value="mRNA"/>
</dbReference>
<dbReference type="EMBL" id="AK012525">
    <property type="protein sequence ID" value="BAB28296.1"/>
    <property type="molecule type" value="mRNA"/>
</dbReference>
<dbReference type="EMBL" id="AK028204">
    <property type="protein sequence ID" value="BAC25812.1"/>
    <property type="molecule type" value="mRNA"/>
</dbReference>
<dbReference type="EMBL" id="AK146768">
    <property type="protein sequence ID" value="BAE27419.1"/>
    <property type="molecule type" value="mRNA"/>
</dbReference>
<dbReference type="EMBL" id="AK148453">
    <property type="protein sequence ID" value="BAE28563.1"/>
    <property type="molecule type" value="mRNA"/>
</dbReference>
<dbReference type="EMBL" id="AK150705">
    <property type="protein sequence ID" value="BAE29784.1"/>
    <property type="molecule type" value="mRNA"/>
</dbReference>
<dbReference type="EMBL" id="AK168282">
    <property type="protein sequence ID" value="BAE40228.1"/>
    <property type="molecule type" value="mRNA"/>
</dbReference>
<dbReference type="EMBL" id="BC046339">
    <property type="protein sequence ID" value="AAH46339.1"/>
    <property type="molecule type" value="mRNA"/>
</dbReference>
<dbReference type="CCDS" id="CCDS20443.1"/>
<dbReference type="PIR" id="A02829">
    <property type="entry name" value="R5MS32"/>
</dbReference>
<dbReference type="RefSeq" id="NP_742083.1">
    <property type="nucleotide sequence ID" value="NM_172086.2"/>
</dbReference>
<dbReference type="PDB" id="6SWA">
    <property type="method" value="EM"/>
    <property type="resolution" value="3.10 A"/>
    <property type="chains" value="c=1-135"/>
</dbReference>
<dbReference type="PDB" id="7CPU">
    <property type="method" value="EM"/>
    <property type="resolution" value="2.82 A"/>
    <property type="chains" value="Le=1-135"/>
</dbReference>
<dbReference type="PDB" id="7CPV">
    <property type="method" value="EM"/>
    <property type="resolution" value="3.03 A"/>
    <property type="chains" value="Le=1-135"/>
</dbReference>
<dbReference type="PDB" id="7LS1">
    <property type="method" value="EM"/>
    <property type="resolution" value="3.30 A"/>
    <property type="chains" value="Y2=1-135"/>
</dbReference>
<dbReference type="PDB" id="7LS2">
    <property type="method" value="EM"/>
    <property type="resolution" value="3.10 A"/>
    <property type="chains" value="Y2=1-135"/>
</dbReference>
<dbReference type="PDBsum" id="6SWA"/>
<dbReference type="PDBsum" id="7CPU"/>
<dbReference type="PDBsum" id="7CPV"/>
<dbReference type="PDBsum" id="7LS1"/>
<dbReference type="PDBsum" id="7LS2"/>
<dbReference type="EMDB" id="EMD-10321"/>
<dbReference type="EMDB" id="EMD-23500"/>
<dbReference type="EMDB" id="EMD-23501"/>
<dbReference type="EMDB" id="EMD-30432"/>
<dbReference type="EMDB" id="EMD-30433"/>
<dbReference type="SMR" id="P62911"/>
<dbReference type="BioGRID" id="202982">
    <property type="interactions" value="81"/>
</dbReference>
<dbReference type="ComplexPortal" id="CPX-5262">
    <property type="entry name" value="60S cytosolic large ribosomal subunit"/>
</dbReference>
<dbReference type="ComplexPortal" id="CPX-7662">
    <property type="entry name" value="60S cytosolic large ribosomal subunit, testis-specific variant"/>
</dbReference>
<dbReference type="ComplexPortal" id="CPX-7663">
    <property type="entry name" value="60S cytosolic large ribosomal subunit, striated muscle variant"/>
</dbReference>
<dbReference type="FunCoup" id="P62911">
    <property type="interactions" value="2617"/>
</dbReference>
<dbReference type="IntAct" id="P62911">
    <property type="interactions" value="1"/>
</dbReference>
<dbReference type="MINT" id="P62911"/>
<dbReference type="STRING" id="10090.ENSMUSP00000145350"/>
<dbReference type="GlyGen" id="P62911">
    <property type="glycosylation" value="2 sites, 1 N-linked glycan (1 site), 1 O-linked glycan (1 site)"/>
</dbReference>
<dbReference type="iPTMnet" id="P62911"/>
<dbReference type="PhosphoSitePlus" id="P62911"/>
<dbReference type="SwissPalm" id="P62911"/>
<dbReference type="jPOST" id="P62911"/>
<dbReference type="PaxDb" id="10090-ENSMUSP00000080523"/>
<dbReference type="PeptideAtlas" id="P62911"/>
<dbReference type="ProteomicsDB" id="260974"/>
<dbReference type="Pumba" id="P62911"/>
<dbReference type="TopDownProteomics" id="P62911"/>
<dbReference type="Antibodypedia" id="10834">
    <property type="antibodies" value="103 antibodies from 25 providers"/>
</dbReference>
<dbReference type="DNASU" id="19951"/>
<dbReference type="Ensembl" id="ENSMUST00000081840.6">
    <property type="protein sequence ID" value="ENSMUSP00000080523.4"/>
    <property type="gene ID" value="ENSMUSG00000057841.6"/>
</dbReference>
<dbReference type="Ensembl" id="ENSMUST00000203816.2">
    <property type="protein sequence ID" value="ENSMUSP00000145350.2"/>
    <property type="gene ID" value="ENSMUSG00000057841.6"/>
</dbReference>
<dbReference type="GeneID" id="19951"/>
<dbReference type="KEGG" id="mmu:19951"/>
<dbReference type="UCSC" id="uc009djc.1">
    <property type="organism name" value="mouse"/>
</dbReference>
<dbReference type="AGR" id="MGI:98038"/>
<dbReference type="CTD" id="6161"/>
<dbReference type="MGI" id="MGI:98038">
    <property type="gene designation" value="Rpl32"/>
</dbReference>
<dbReference type="VEuPathDB" id="HostDB:ENSMUSG00000057841"/>
<dbReference type="eggNOG" id="KOG0878">
    <property type="taxonomic scope" value="Eukaryota"/>
</dbReference>
<dbReference type="GeneTree" id="ENSGT00940000153973"/>
<dbReference type="HOGENOM" id="CLU_071479_4_1_1"/>
<dbReference type="InParanoid" id="P62911"/>
<dbReference type="OMA" id="HPSGYEE"/>
<dbReference type="OrthoDB" id="268693at2759"/>
<dbReference type="PhylomeDB" id="P62911"/>
<dbReference type="TreeFam" id="TF314947"/>
<dbReference type="Reactome" id="R-MMU-156827">
    <property type="pathway name" value="L13a-mediated translational silencing of Ceruloplasmin expression"/>
</dbReference>
<dbReference type="Reactome" id="R-MMU-1799339">
    <property type="pathway name" value="SRP-dependent cotranslational protein targeting to membrane"/>
</dbReference>
<dbReference type="Reactome" id="R-MMU-6791226">
    <property type="pathway name" value="Major pathway of rRNA processing in the nucleolus and cytosol"/>
</dbReference>
<dbReference type="Reactome" id="R-MMU-72689">
    <property type="pathway name" value="Formation of a pool of free 40S subunits"/>
</dbReference>
<dbReference type="Reactome" id="R-MMU-72706">
    <property type="pathway name" value="GTP hydrolysis and joining of the 60S ribosomal subunit"/>
</dbReference>
<dbReference type="Reactome" id="R-MMU-975956">
    <property type="pathway name" value="Nonsense Mediated Decay (NMD) independent of the Exon Junction Complex (EJC)"/>
</dbReference>
<dbReference type="Reactome" id="R-MMU-975957">
    <property type="pathway name" value="Nonsense Mediated Decay (NMD) enhanced by the Exon Junction Complex (EJC)"/>
</dbReference>
<dbReference type="BioGRID-ORCS" id="19951">
    <property type="hits" value="26 hits in 59 CRISPR screens"/>
</dbReference>
<dbReference type="CD-CODE" id="5E82D60E">
    <property type="entry name" value="Nucleolus"/>
</dbReference>
<dbReference type="CD-CODE" id="CE726F99">
    <property type="entry name" value="Postsynaptic density"/>
</dbReference>
<dbReference type="ChiTaRS" id="Rpl32">
    <property type="organism name" value="mouse"/>
</dbReference>
<dbReference type="PRO" id="PR:P62911"/>
<dbReference type="Proteomes" id="UP000000589">
    <property type="component" value="Chromosome 6"/>
</dbReference>
<dbReference type="RNAct" id="P62911">
    <property type="molecule type" value="protein"/>
</dbReference>
<dbReference type="Bgee" id="ENSMUSG00000057841">
    <property type="expression patterns" value="Expressed in epiblast cell in embryo and 68 other cell types or tissues"/>
</dbReference>
<dbReference type="GO" id="GO:0005737">
    <property type="term" value="C:cytoplasm"/>
    <property type="evidence" value="ECO:0000314"/>
    <property type="project" value="ComplexPortal"/>
</dbReference>
<dbReference type="GO" id="GO:0005829">
    <property type="term" value="C:cytosol"/>
    <property type="evidence" value="ECO:0000304"/>
    <property type="project" value="Reactome"/>
</dbReference>
<dbReference type="GO" id="GO:0022625">
    <property type="term" value="C:cytosolic large ribosomal subunit"/>
    <property type="evidence" value="ECO:0000314"/>
    <property type="project" value="UniProtKB"/>
</dbReference>
<dbReference type="GO" id="GO:0098794">
    <property type="term" value="C:postsynapse"/>
    <property type="evidence" value="ECO:0000303"/>
    <property type="project" value="SynGO"/>
</dbReference>
<dbReference type="GO" id="GO:0098793">
    <property type="term" value="C:presynapse"/>
    <property type="evidence" value="ECO:0000303"/>
    <property type="project" value="SynGO"/>
</dbReference>
<dbReference type="GO" id="GO:0005840">
    <property type="term" value="C:ribosome"/>
    <property type="evidence" value="ECO:0000303"/>
    <property type="project" value="SynGO"/>
</dbReference>
<dbReference type="GO" id="GO:0045202">
    <property type="term" value="C:synapse"/>
    <property type="evidence" value="ECO:0000314"/>
    <property type="project" value="SynGO"/>
</dbReference>
<dbReference type="GO" id="GO:0003735">
    <property type="term" value="F:structural constituent of ribosome"/>
    <property type="evidence" value="ECO:0000314"/>
    <property type="project" value="UniProtKB"/>
</dbReference>
<dbReference type="GO" id="GO:0071549">
    <property type="term" value="P:cellular response to dexamethasone stimulus"/>
    <property type="evidence" value="ECO:0007669"/>
    <property type="project" value="Ensembl"/>
</dbReference>
<dbReference type="GO" id="GO:0002181">
    <property type="term" value="P:cytoplasmic translation"/>
    <property type="evidence" value="ECO:0000303"/>
    <property type="project" value="ComplexPortal"/>
</dbReference>
<dbReference type="GO" id="GO:0097421">
    <property type="term" value="P:liver regeneration"/>
    <property type="evidence" value="ECO:0007669"/>
    <property type="project" value="Ensembl"/>
</dbReference>
<dbReference type="GO" id="GO:0006412">
    <property type="term" value="P:translation"/>
    <property type="evidence" value="ECO:0000305"/>
    <property type="project" value="MGI"/>
</dbReference>
<dbReference type="GO" id="GO:0140242">
    <property type="term" value="P:translation at postsynapse"/>
    <property type="evidence" value="ECO:0000303"/>
    <property type="project" value="SynGO"/>
</dbReference>
<dbReference type="GO" id="GO:0140236">
    <property type="term" value="P:translation at presynapse"/>
    <property type="evidence" value="ECO:0000303"/>
    <property type="project" value="SynGO"/>
</dbReference>
<dbReference type="CDD" id="cd00513">
    <property type="entry name" value="Ribosomal_L32_L32e"/>
    <property type="match status" value="1"/>
</dbReference>
<dbReference type="InterPro" id="IPR001515">
    <property type="entry name" value="Ribosomal_eL32"/>
</dbReference>
<dbReference type="InterPro" id="IPR018263">
    <property type="entry name" value="Ribosomal_eL32_CS"/>
</dbReference>
<dbReference type="InterPro" id="IPR036351">
    <property type="entry name" value="Ribosomal_eL32_sf"/>
</dbReference>
<dbReference type="PANTHER" id="PTHR23413">
    <property type="entry name" value="60S RIBOSOMAL PROTEIN L32 AND DNA-DIRECTED RNA POLYMERASE II, SUBUNIT N"/>
    <property type="match status" value="1"/>
</dbReference>
<dbReference type="PANTHER" id="PTHR23413:SF6">
    <property type="entry name" value="LARGE RIBOSOMAL SUBUNIT PROTEIN EL32"/>
    <property type="match status" value="1"/>
</dbReference>
<dbReference type="Pfam" id="PF01655">
    <property type="entry name" value="Ribosomal_L32e"/>
    <property type="match status" value="1"/>
</dbReference>
<dbReference type="SMART" id="SM01393">
    <property type="entry name" value="Ribosomal_L32e"/>
    <property type="match status" value="1"/>
</dbReference>
<dbReference type="SUPFAM" id="SSF52042">
    <property type="entry name" value="Ribosomal protein L32e"/>
    <property type="match status" value="1"/>
</dbReference>
<dbReference type="PROSITE" id="PS00580">
    <property type="entry name" value="RIBOSOMAL_L32E"/>
    <property type="match status" value="1"/>
</dbReference>
<accession>P62911</accession>
<accession>P02433</accession>
<accession>Q3UFJ7</accession>
<gene>
    <name type="primary">Rpl32</name>
</gene>
<keyword id="KW-0002">3D-structure</keyword>
<keyword id="KW-0963">Cytoplasm</keyword>
<keyword id="KW-1017">Isopeptide bond</keyword>
<keyword id="KW-0597">Phosphoprotein</keyword>
<keyword id="KW-1185">Reference proteome</keyword>
<keyword id="KW-0687">Ribonucleoprotein</keyword>
<keyword id="KW-0689">Ribosomal protein</keyword>
<keyword id="KW-0832">Ubl conjugation</keyword>